<dbReference type="EMBL" id="AB000201">
    <property type="protein sequence ID" value="BAA19069.1"/>
    <property type="molecule type" value="mRNA"/>
</dbReference>
<dbReference type="EMBL" id="S78800">
    <property type="protein sequence ID" value="AAB35036.1"/>
    <property type="molecule type" value="mRNA"/>
</dbReference>
<dbReference type="PIR" id="B49739">
    <property type="entry name" value="A49739"/>
</dbReference>
<dbReference type="PIR" id="I47053">
    <property type="entry name" value="I47053"/>
</dbReference>
<dbReference type="RefSeq" id="NP_001075278.1">
    <property type="nucleotide sequence ID" value="NM_001081809.1"/>
</dbReference>
<dbReference type="GeneID" id="100033823"/>
<dbReference type="KEGG" id="ecb:100033823"/>
<dbReference type="CTD" id="100329416"/>
<dbReference type="InParanoid" id="P22969"/>
<dbReference type="OrthoDB" id="8784777at2759"/>
<dbReference type="Proteomes" id="UP000002281">
    <property type="component" value="Unplaced"/>
</dbReference>
<dbReference type="GO" id="GO:0005576">
    <property type="term" value="C:extracellular region"/>
    <property type="evidence" value="ECO:0007669"/>
    <property type="project" value="UniProtKB-SubCell"/>
</dbReference>
<dbReference type="GO" id="GO:0005179">
    <property type="term" value="F:hormone activity"/>
    <property type="evidence" value="ECO:0007669"/>
    <property type="project" value="UniProtKB-KW"/>
</dbReference>
<dbReference type="CDD" id="cd00101">
    <property type="entry name" value="IlGF_like"/>
    <property type="match status" value="1"/>
</dbReference>
<dbReference type="CDD" id="cd04365">
    <property type="entry name" value="IlGF_relaxin_like"/>
    <property type="match status" value="1"/>
</dbReference>
<dbReference type="InterPro" id="IPR016179">
    <property type="entry name" value="Insulin-like"/>
</dbReference>
<dbReference type="InterPro" id="IPR036438">
    <property type="entry name" value="Insulin-like_sf"/>
</dbReference>
<dbReference type="InterPro" id="IPR022353">
    <property type="entry name" value="Insulin_CS"/>
</dbReference>
<dbReference type="InterPro" id="IPR022421">
    <property type="entry name" value="Relaxin"/>
</dbReference>
<dbReference type="InterPro" id="IPR051042">
    <property type="entry name" value="Repro_Hormone_Insulin-like"/>
</dbReference>
<dbReference type="PANTHER" id="PTHR12004:SF13">
    <property type="entry name" value="PRORELAXIN H2"/>
    <property type="match status" value="1"/>
</dbReference>
<dbReference type="PANTHER" id="PTHR12004">
    <property type="entry name" value="RELAXIN"/>
    <property type="match status" value="1"/>
</dbReference>
<dbReference type="Pfam" id="PF00049">
    <property type="entry name" value="Insulin"/>
    <property type="match status" value="1"/>
</dbReference>
<dbReference type="PRINTS" id="PR02004">
    <property type="entry name" value="RELAXIN"/>
</dbReference>
<dbReference type="SMART" id="SM00078">
    <property type="entry name" value="IlGF"/>
    <property type="match status" value="1"/>
</dbReference>
<dbReference type="SUPFAM" id="SSF56994">
    <property type="entry name" value="Insulin-like"/>
    <property type="match status" value="1"/>
</dbReference>
<dbReference type="PROSITE" id="PS00262">
    <property type="entry name" value="INSULIN"/>
    <property type="match status" value="1"/>
</dbReference>
<reference key="1">
    <citation type="journal article" date="1996" name="J. Reprod. Dev.">
        <title>Molecular cloning of equine preprorelaxin cDNA.</title>
        <authorList>
            <person name="Min K."/>
            <person name="Shiota K."/>
            <person name="Ogawa T."/>
        </authorList>
    </citation>
    <scope>NUCLEOTIDE SEQUENCE [MRNA]</scope>
    <source>
        <strain>Hokkaido</strain>
        <tissue>Placenta</tissue>
    </source>
</reference>
<reference key="2">
    <citation type="journal article" date="1995" name="Biol. Reprod.">
        <title>Partial complementary deoxyribonucleic acid cloning of equine relaxin messenger ribonucleic acid, and its localization within the equine placenta.</title>
        <authorList>
            <person name="Klonisch T."/>
            <person name="Ryan P.L."/>
            <person name="Yamashiro S."/>
            <person name="Porter D.G."/>
        </authorList>
    </citation>
    <scope>NUCLEOTIDE SEQUENCE [MRNA] OF 32-174</scope>
    <source>
        <tissue>Placenta</tissue>
    </source>
</reference>
<reference key="3">
    <citation type="journal article" date="1991" name="Endocrinology">
        <title>Affinity purification and sequence determination of equine relaxin.</title>
        <authorList>
            <person name="Stewart D.R."/>
            <person name="Nevins B."/>
            <person name="Hadas E."/>
            <person name="Vandlen R."/>
        </authorList>
    </citation>
    <scope>PROTEIN SEQUENCE OF 26-53 AND 163-182</scope>
    <scope>PYROGLUTAMATE FORMATION AT GLN-26 AND GLN-163</scope>
    <scope>MASS SPECTROMETRY</scope>
    <source>
        <tissue>Placenta</tissue>
    </source>
</reference>
<accession>P22969</accession>
<accession>Q28907</accession>
<comment type="function">
    <text>Relaxin is an ovarian hormone that acts with estrogen to produce dilatation of the birth canal in many mammals.</text>
</comment>
<comment type="subunit">
    <text>Heterodimer of a B chain and an A chain linked by two disulfide bonds.</text>
</comment>
<comment type="subcellular location">
    <subcellularLocation>
        <location>Secreted</location>
    </subcellularLocation>
</comment>
<comment type="mass spectrometry" mass="2855.2" method="FAB" evidence="2">
    <molecule>Relaxin B chain</molecule>
    <text>With pyrrolidone carboxylic acid at Gln-26, isoform lacking 52-WK-53.</text>
</comment>
<comment type="mass spectrometry" mass="2397.4" method="FAB" evidence="2">
    <molecule>Relaxin A chain</molecule>
    <text>With pyrrolidone carboxylic acid at Gln-163.</text>
</comment>
<comment type="similarity">
    <text evidence="3">Belongs to the insulin family.</text>
</comment>
<gene>
    <name type="primary">RLN</name>
</gene>
<name>RELX_HORSE</name>
<proteinExistence type="evidence at protein level"/>
<sequence length="182" mass="20721">MRRLFLSHVLGAWLLLSQLPRELSGQKPDDVIKACGRELARLRIEICGSLSWKKTVLRLEEPGLEAGQPVEIVSSSISKDAEALNTKLGLNSNLPKEQKATLSERQPSWRELLQQPALKDSNLNLEEFEETILKTQSEVEDDSLSELKNLGLDKHSRKKRMIQLSHKCCYWGCTRKELARQC</sequence>
<feature type="signal peptide" evidence="2">
    <location>
        <begin position="1"/>
        <end position="25"/>
    </location>
</feature>
<feature type="peptide" id="PRO_0000016073" description="Relaxin B chain">
    <location>
        <begin position="26"/>
        <end position="53"/>
    </location>
</feature>
<feature type="propeptide" id="PRO_0000016074" description="Connecting peptide">
    <location>
        <begin position="54"/>
        <end position="156"/>
    </location>
</feature>
<feature type="propeptide" id="PRO_0000278776" evidence="2">
    <location>
        <begin position="161"/>
        <end position="162"/>
    </location>
</feature>
<feature type="peptide" id="PRO_0000016075" description="Relaxin A chain">
    <location>
        <begin position="163"/>
        <end position="182"/>
    </location>
</feature>
<feature type="modified residue" description="Pyrrolidone carboxylic acid" evidence="2">
    <location>
        <position position="26"/>
    </location>
</feature>
<feature type="modified residue" description="Pyrrolidone carboxylic acid" evidence="2">
    <location>
        <position position="163"/>
    </location>
</feature>
<feature type="disulfide bond" description="Interchain (between B and A chains)" evidence="1">
    <location>
        <begin position="35"/>
        <end position="169"/>
    </location>
</feature>
<feature type="disulfide bond" description="Interchain (between B and A chains)" evidence="1">
    <location>
        <begin position="47"/>
        <end position="182"/>
    </location>
</feature>
<feature type="disulfide bond" evidence="1">
    <location>
        <begin position="168"/>
        <end position="173"/>
    </location>
</feature>
<feature type="sequence conflict" description="In Ref. 2; AAB35036." evidence="3" ref="2">
    <original>A</original>
    <variation>V</variation>
    <location>
        <position position="66"/>
    </location>
</feature>
<feature type="sequence conflict" description="In Ref. 2; AAB35036." evidence="3" ref="2">
    <original>L</original>
    <variation>Q</variation>
    <location>
        <position position="133"/>
    </location>
</feature>
<evidence type="ECO:0000250" key="1"/>
<evidence type="ECO:0000269" key="2">
    <source>
    </source>
</evidence>
<evidence type="ECO:0000305" key="3"/>
<protein>
    <recommendedName>
        <fullName>Prorelaxin</fullName>
        <shortName>RXN</shortName>
    </recommendedName>
    <component>
        <recommendedName>
            <fullName>Relaxin B chain</fullName>
        </recommendedName>
    </component>
    <component>
        <recommendedName>
            <fullName>Relaxin A chain</fullName>
        </recommendedName>
    </component>
</protein>
<keyword id="KW-0165">Cleavage on pair of basic residues</keyword>
<keyword id="KW-0903">Direct protein sequencing</keyword>
<keyword id="KW-1015">Disulfide bond</keyword>
<keyword id="KW-0372">Hormone</keyword>
<keyword id="KW-0873">Pyrrolidone carboxylic acid</keyword>
<keyword id="KW-1185">Reference proteome</keyword>
<keyword id="KW-0964">Secreted</keyword>
<keyword id="KW-0732">Signal</keyword>
<organism>
    <name type="scientific">Equus caballus</name>
    <name type="common">Horse</name>
    <dbReference type="NCBI Taxonomy" id="9796"/>
    <lineage>
        <taxon>Eukaryota</taxon>
        <taxon>Metazoa</taxon>
        <taxon>Chordata</taxon>
        <taxon>Craniata</taxon>
        <taxon>Vertebrata</taxon>
        <taxon>Euteleostomi</taxon>
        <taxon>Mammalia</taxon>
        <taxon>Eutheria</taxon>
        <taxon>Laurasiatheria</taxon>
        <taxon>Perissodactyla</taxon>
        <taxon>Equidae</taxon>
        <taxon>Equus</taxon>
    </lineage>
</organism>